<protein>
    <recommendedName>
        <fullName evidence="1">Cobalt transport protein CbiN</fullName>
    </recommendedName>
    <alternativeName>
        <fullName evidence="1">Energy-coupling factor transporter probable substrate-capture protein CbiN</fullName>
        <shortName evidence="1">ECF transporter S component CbiN</shortName>
    </alternativeName>
</protein>
<proteinExistence type="inferred from homology"/>
<sequence>MKNKRVLTNVILLLLVVFITIIPFFVAKNGEFGGSDDQAEEAITQIDENYEPWFSPLFEPASGEIESLLFALQAAIGAGVIGFGLGYLKGKKKVNDEVNDKHR</sequence>
<accession>Q8XNY9</accession>
<keyword id="KW-1003">Cell membrane</keyword>
<keyword id="KW-0169">Cobalamin biosynthesis</keyword>
<keyword id="KW-0170">Cobalt</keyword>
<keyword id="KW-0171">Cobalt transport</keyword>
<keyword id="KW-0406">Ion transport</keyword>
<keyword id="KW-0472">Membrane</keyword>
<keyword id="KW-1185">Reference proteome</keyword>
<keyword id="KW-0812">Transmembrane</keyword>
<keyword id="KW-1133">Transmembrane helix</keyword>
<keyword id="KW-0813">Transport</keyword>
<reference key="1">
    <citation type="journal article" date="2002" name="Proc. Natl. Acad. Sci. U.S.A.">
        <title>Complete genome sequence of Clostridium perfringens, an anaerobic flesh-eater.</title>
        <authorList>
            <person name="Shimizu T."/>
            <person name="Ohtani K."/>
            <person name="Hirakawa H."/>
            <person name="Ohshima K."/>
            <person name="Yamashita A."/>
            <person name="Shiba T."/>
            <person name="Ogasawara N."/>
            <person name="Hattori M."/>
            <person name="Kuhara S."/>
            <person name="Hayashi H."/>
        </authorList>
    </citation>
    <scope>NUCLEOTIDE SEQUENCE [LARGE SCALE GENOMIC DNA]</scope>
    <source>
        <strain>13 / Type A</strain>
    </source>
</reference>
<name>CBIN_CLOPE</name>
<gene>
    <name evidence="1" type="primary">cbiN</name>
    <name type="ordered locus">CPE0193</name>
</gene>
<dbReference type="EMBL" id="BA000016">
    <property type="protein sequence ID" value="BAB79899.1"/>
    <property type="molecule type" value="Genomic_DNA"/>
</dbReference>
<dbReference type="RefSeq" id="WP_003452599.1">
    <property type="nucleotide sequence ID" value="NC_003366.1"/>
</dbReference>
<dbReference type="STRING" id="195102.gene:10489437"/>
<dbReference type="KEGG" id="cpe:CPE0193"/>
<dbReference type="HOGENOM" id="CLU_136197_2_0_9"/>
<dbReference type="UniPathway" id="UPA00148"/>
<dbReference type="Proteomes" id="UP000000818">
    <property type="component" value="Chromosome"/>
</dbReference>
<dbReference type="GO" id="GO:0005886">
    <property type="term" value="C:plasma membrane"/>
    <property type="evidence" value="ECO:0007669"/>
    <property type="project" value="UniProtKB-SubCell"/>
</dbReference>
<dbReference type="GO" id="GO:0015087">
    <property type="term" value="F:cobalt ion transmembrane transporter activity"/>
    <property type="evidence" value="ECO:0007669"/>
    <property type="project" value="UniProtKB-UniRule"/>
</dbReference>
<dbReference type="GO" id="GO:0009236">
    <property type="term" value="P:cobalamin biosynthetic process"/>
    <property type="evidence" value="ECO:0007669"/>
    <property type="project" value="UniProtKB-UniRule"/>
</dbReference>
<dbReference type="HAMAP" id="MF_00330">
    <property type="entry name" value="CbiN"/>
    <property type="match status" value="1"/>
</dbReference>
<dbReference type="InterPro" id="IPR003705">
    <property type="entry name" value="CbiN"/>
</dbReference>
<dbReference type="NCBIfam" id="TIGR01165">
    <property type="entry name" value="cbiN"/>
    <property type="match status" value="1"/>
</dbReference>
<dbReference type="NCBIfam" id="NF002780">
    <property type="entry name" value="PRK02898.1"/>
    <property type="match status" value="1"/>
</dbReference>
<dbReference type="PANTHER" id="PTHR38662">
    <property type="entry name" value="COBALT TRANSPORT PROTEIN CBIN"/>
    <property type="match status" value="1"/>
</dbReference>
<dbReference type="PANTHER" id="PTHR38662:SF1">
    <property type="entry name" value="COBALT TRANSPORT PROTEIN CBIN"/>
    <property type="match status" value="1"/>
</dbReference>
<dbReference type="Pfam" id="PF02553">
    <property type="entry name" value="CbiN"/>
    <property type="match status" value="1"/>
</dbReference>
<comment type="function">
    <text evidence="1">Part of the energy-coupling factor (ECF) transporter complex CbiMNOQ involved in cobalt import.</text>
</comment>
<comment type="pathway">
    <text evidence="1">Cofactor biosynthesis; adenosylcobalamin biosynthesis.</text>
</comment>
<comment type="subunit">
    <text evidence="1">Forms an energy-coupling factor (ECF) transporter complex composed of an ATP-binding protein (A component, CbiO), a transmembrane protein (T component, CbiQ) and 2 possible substrate-capture proteins (S components, CbiM and CbiN) of unknown stoichimetry.</text>
</comment>
<comment type="subcellular location">
    <subcellularLocation>
        <location evidence="1">Cell membrane</location>
        <topology evidence="1">Multi-pass membrane protein</topology>
    </subcellularLocation>
</comment>
<comment type="similarity">
    <text evidence="1">Belongs to the CbiN family.</text>
</comment>
<feature type="chain" id="PRO_0000134695" description="Cobalt transport protein CbiN">
    <location>
        <begin position="1"/>
        <end position="103"/>
    </location>
</feature>
<feature type="transmembrane region" description="Helical" evidence="1">
    <location>
        <begin position="6"/>
        <end position="26"/>
    </location>
</feature>
<feature type="transmembrane region" description="Helical" evidence="1">
    <location>
        <begin position="68"/>
        <end position="88"/>
    </location>
</feature>
<organism>
    <name type="scientific">Clostridium perfringens (strain 13 / Type A)</name>
    <dbReference type="NCBI Taxonomy" id="195102"/>
    <lineage>
        <taxon>Bacteria</taxon>
        <taxon>Bacillati</taxon>
        <taxon>Bacillota</taxon>
        <taxon>Clostridia</taxon>
        <taxon>Eubacteriales</taxon>
        <taxon>Clostridiaceae</taxon>
        <taxon>Clostridium</taxon>
    </lineage>
</organism>
<evidence type="ECO:0000255" key="1">
    <source>
        <dbReference type="HAMAP-Rule" id="MF_00330"/>
    </source>
</evidence>